<proteinExistence type="inferred from homology"/>
<evidence type="ECO:0000250" key="1"/>
<evidence type="ECO:0000305" key="2"/>
<geneLocation type="chloroplast"/>
<protein>
    <recommendedName>
        <fullName>NAD(P)H-quinone oxidoreductase subunit K, chloroplastic</fullName>
        <ecNumber>7.1.1.-</ecNumber>
    </recommendedName>
    <alternativeName>
        <fullName>NAD(P)H dehydrogenase subunit K</fullName>
    </alternativeName>
    <alternativeName>
        <fullName>NADH-plastoquinone oxidoreductase subunit K</fullName>
    </alternativeName>
</protein>
<organism>
    <name type="scientific">Huperzia lucidula</name>
    <name type="common">Shining clubmoss</name>
    <name type="synonym">Lycopodium lucidulum</name>
    <dbReference type="NCBI Taxonomy" id="37429"/>
    <lineage>
        <taxon>Eukaryota</taxon>
        <taxon>Viridiplantae</taxon>
        <taxon>Streptophyta</taxon>
        <taxon>Embryophyta</taxon>
        <taxon>Tracheophyta</taxon>
        <taxon>Lycopodiopsida</taxon>
        <taxon>Lycopodiales</taxon>
        <taxon>Lycopodiaceae</taxon>
        <taxon>Huperzioideae</taxon>
        <taxon>Huperzia</taxon>
    </lineage>
</organism>
<accession>Q5SD03</accession>
<reference key="1">
    <citation type="journal article" date="2005" name="Gene">
        <title>The first complete chloroplast genome sequence of a lycophyte, Huperzia lucidula (Lycopodiaceae).</title>
        <authorList>
            <person name="Wolf P.G."/>
            <person name="Karol K.G."/>
            <person name="Mandoli D.F."/>
            <person name="Kuehl J.V."/>
            <person name="Arumuganathan K."/>
            <person name="Ellis M.W."/>
            <person name="Mishler B.D."/>
            <person name="Kelch D.G."/>
            <person name="Olmstead R.G."/>
            <person name="Boore J.L."/>
        </authorList>
    </citation>
    <scope>NUCLEOTIDE SEQUENCE [LARGE SCALE GENOMIC DNA]</scope>
</reference>
<feature type="chain" id="PRO_0000376418" description="NAD(P)H-quinone oxidoreductase subunit K, chloroplastic">
    <location>
        <begin position="1"/>
        <end position="263"/>
    </location>
</feature>
<feature type="binding site" evidence="1">
    <location>
        <position position="64"/>
    </location>
    <ligand>
        <name>[4Fe-4S] cluster</name>
        <dbReference type="ChEBI" id="CHEBI:49883"/>
    </ligand>
</feature>
<feature type="binding site" evidence="1">
    <location>
        <position position="65"/>
    </location>
    <ligand>
        <name>[4Fe-4S] cluster</name>
        <dbReference type="ChEBI" id="CHEBI:49883"/>
    </ligand>
</feature>
<feature type="binding site" evidence="1">
    <location>
        <position position="129"/>
    </location>
    <ligand>
        <name>[4Fe-4S] cluster</name>
        <dbReference type="ChEBI" id="CHEBI:49883"/>
    </ligand>
</feature>
<feature type="binding site" evidence="1">
    <location>
        <position position="160"/>
    </location>
    <ligand>
        <name>[4Fe-4S] cluster</name>
        <dbReference type="ChEBI" id="CHEBI:49883"/>
    </ligand>
</feature>
<comment type="function">
    <text evidence="1">NDH shuttles electrons from NAD(P)H:plastoquinone, via FMN and iron-sulfur (Fe-S) centers, to quinones in the photosynthetic chain and possibly in a chloroplast respiratory chain. The immediate electron acceptor for the enzyme in this species is believed to be plastoquinone. Couples the redox reaction to proton translocation, and thus conserves the redox energy in a proton gradient (By similarity).</text>
</comment>
<comment type="catalytic activity">
    <reaction>
        <text>a plastoquinone + NADH + (n+1) H(+)(in) = a plastoquinol + NAD(+) + n H(+)(out)</text>
        <dbReference type="Rhea" id="RHEA:42608"/>
        <dbReference type="Rhea" id="RHEA-COMP:9561"/>
        <dbReference type="Rhea" id="RHEA-COMP:9562"/>
        <dbReference type="ChEBI" id="CHEBI:15378"/>
        <dbReference type="ChEBI" id="CHEBI:17757"/>
        <dbReference type="ChEBI" id="CHEBI:57540"/>
        <dbReference type="ChEBI" id="CHEBI:57945"/>
        <dbReference type="ChEBI" id="CHEBI:62192"/>
    </reaction>
</comment>
<comment type="catalytic activity">
    <reaction>
        <text>a plastoquinone + NADPH + (n+1) H(+)(in) = a plastoquinol + NADP(+) + n H(+)(out)</text>
        <dbReference type="Rhea" id="RHEA:42612"/>
        <dbReference type="Rhea" id="RHEA-COMP:9561"/>
        <dbReference type="Rhea" id="RHEA-COMP:9562"/>
        <dbReference type="ChEBI" id="CHEBI:15378"/>
        <dbReference type="ChEBI" id="CHEBI:17757"/>
        <dbReference type="ChEBI" id="CHEBI:57783"/>
        <dbReference type="ChEBI" id="CHEBI:58349"/>
        <dbReference type="ChEBI" id="CHEBI:62192"/>
    </reaction>
</comment>
<comment type="cofactor">
    <cofactor evidence="1">
        <name>[4Fe-4S] cluster</name>
        <dbReference type="ChEBI" id="CHEBI:49883"/>
    </cofactor>
    <text evidence="1">Binds 1 [4Fe-4S] cluster.</text>
</comment>
<comment type="subunit">
    <text evidence="1">NDH is composed of at least 16 different subunits, 5 of which are encoded in the nucleus.</text>
</comment>
<comment type="subcellular location">
    <subcellularLocation>
        <location evidence="1">Plastid</location>
        <location evidence="1">Chloroplast thylakoid membrane</location>
        <topology evidence="1">Peripheral membrane protein</topology>
        <orientation evidence="1">Stromal side</orientation>
    </subcellularLocation>
</comment>
<comment type="similarity">
    <text evidence="2">Belongs to the complex I 20 kDa subunit family.</text>
</comment>
<keyword id="KW-0004">4Fe-4S</keyword>
<keyword id="KW-0150">Chloroplast</keyword>
<keyword id="KW-0408">Iron</keyword>
<keyword id="KW-0411">Iron-sulfur</keyword>
<keyword id="KW-0472">Membrane</keyword>
<keyword id="KW-0479">Metal-binding</keyword>
<keyword id="KW-0520">NAD</keyword>
<keyword id="KW-0521">NADP</keyword>
<keyword id="KW-0934">Plastid</keyword>
<keyword id="KW-0618">Plastoquinone</keyword>
<keyword id="KW-0874">Quinone</keyword>
<keyword id="KW-0793">Thylakoid</keyword>
<keyword id="KW-1278">Translocase</keyword>
<keyword id="KW-0813">Transport</keyword>
<gene>
    <name type="primary">ndhK</name>
</gene>
<dbReference type="EC" id="7.1.1.-"/>
<dbReference type="EMBL" id="AY660566">
    <property type="protein sequence ID" value="AAT80721.1"/>
    <property type="molecule type" value="Genomic_DNA"/>
</dbReference>
<dbReference type="RefSeq" id="YP_209525.2">
    <property type="nucleotide sequence ID" value="NC_006861.1"/>
</dbReference>
<dbReference type="SMR" id="Q5SD03"/>
<dbReference type="GeneID" id="3283722"/>
<dbReference type="GO" id="GO:0009535">
    <property type="term" value="C:chloroplast thylakoid membrane"/>
    <property type="evidence" value="ECO:0007669"/>
    <property type="project" value="UniProtKB-SubCell"/>
</dbReference>
<dbReference type="GO" id="GO:0045271">
    <property type="term" value="C:respiratory chain complex I"/>
    <property type="evidence" value="ECO:0007669"/>
    <property type="project" value="TreeGrafter"/>
</dbReference>
<dbReference type="GO" id="GO:0051539">
    <property type="term" value="F:4 iron, 4 sulfur cluster binding"/>
    <property type="evidence" value="ECO:0007669"/>
    <property type="project" value="UniProtKB-KW"/>
</dbReference>
<dbReference type="GO" id="GO:0005506">
    <property type="term" value="F:iron ion binding"/>
    <property type="evidence" value="ECO:0007669"/>
    <property type="project" value="UniProtKB-UniRule"/>
</dbReference>
<dbReference type="GO" id="GO:0008137">
    <property type="term" value="F:NADH dehydrogenase (ubiquinone) activity"/>
    <property type="evidence" value="ECO:0007669"/>
    <property type="project" value="InterPro"/>
</dbReference>
<dbReference type="GO" id="GO:0048038">
    <property type="term" value="F:quinone binding"/>
    <property type="evidence" value="ECO:0007669"/>
    <property type="project" value="UniProtKB-KW"/>
</dbReference>
<dbReference type="GO" id="GO:0009060">
    <property type="term" value="P:aerobic respiration"/>
    <property type="evidence" value="ECO:0007669"/>
    <property type="project" value="TreeGrafter"/>
</dbReference>
<dbReference type="GO" id="GO:0015990">
    <property type="term" value="P:electron transport coupled proton transport"/>
    <property type="evidence" value="ECO:0007669"/>
    <property type="project" value="TreeGrafter"/>
</dbReference>
<dbReference type="GO" id="GO:0019684">
    <property type="term" value="P:photosynthesis, light reaction"/>
    <property type="evidence" value="ECO:0007669"/>
    <property type="project" value="UniProtKB-UniRule"/>
</dbReference>
<dbReference type="FunFam" id="3.40.50.12280:FF:000003">
    <property type="entry name" value="NAD(P)H-quinone oxidoreductase subunit K, chloroplastic"/>
    <property type="match status" value="1"/>
</dbReference>
<dbReference type="Gene3D" id="3.40.50.12280">
    <property type="match status" value="1"/>
</dbReference>
<dbReference type="HAMAP" id="MF_01356">
    <property type="entry name" value="NDH1_NuoB"/>
    <property type="match status" value="1"/>
</dbReference>
<dbReference type="InterPro" id="IPR006137">
    <property type="entry name" value="NADH_UbQ_OxRdtase-like_20kDa"/>
</dbReference>
<dbReference type="InterPro" id="IPR006138">
    <property type="entry name" value="NADH_UQ_OxRdtase_20Kd_su"/>
</dbReference>
<dbReference type="NCBIfam" id="TIGR01957">
    <property type="entry name" value="nuoB_fam"/>
    <property type="match status" value="1"/>
</dbReference>
<dbReference type="NCBIfam" id="NF005012">
    <property type="entry name" value="PRK06411.1"/>
    <property type="match status" value="1"/>
</dbReference>
<dbReference type="PANTHER" id="PTHR11995">
    <property type="entry name" value="NADH DEHYDROGENASE"/>
    <property type="match status" value="1"/>
</dbReference>
<dbReference type="PANTHER" id="PTHR11995:SF14">
    <property type="entry name" value="NADH DEHYDROGENASE [UBIQUINONE] IRON-SULFUR PROTEIN 7, MITOCHONDRIAL"/>
    <property type="match status" value="1"/>
</dbReference>
<dbReference type="Pfam" id="PF01058">
    <property type="entry name" value="Oxidored_q6"/>
    <property type="match status" value="1"/>
</dbReference>
<dbReference type="SUPFAM" id="SSF56770">
    <property type="entry name" value="HydA/Nqo6-like"/>
    <property type="match status" value="1"/>
</dbReference>
<sequence>MVLVYKYFSCENEIENSIKPVINLMESSLLDKTTSNSIVLTTFNDFSNWARLSSLWPLLYGTSCCFIESASLIGSRSDSDRYGLVPRSSPRQADLVITAGTVTMKMAPSLVRLYEQMPEPKYVIAMGACTITGGMFSTDSYSTVRGVDKPIPVDVYLPGCPPKPEAIIDAIVKLRKRVAQETYESKIRLKPGNRFFTSIHQFRFVSNNLTGEYSKQSLRQFTKTELYSTLEVPFDETTDEYKGSAVSFQESMDEGDPVAIDKP</sequence>
<name>NDHK_HUPLU</name>